<organism>
    <name type="scientific">Cucumis sativus</name>
    <name type="common">Cucumber</name>
    <dbReference type="NCBI Taxonomy" id="3659"/>
    <lineage>
        <taxon>Eukaryota</taxon>
        <taxon>Viridiplantae</taxon>
        <taxon>Streptophyta</taxon>
        <taxon>Embryophyta</taxon>
        <taxon>Tracheophyta</taxon>
        <taxon>Spermatophyta</taxon>
        <taxon>Magnoliopsida</taxon>
        <taxon>eudicotyledons</taxon>
        <taxon>Gunneridae</taxon>
        <taxon>Pentapetalae</taxon>
        <taxon>rosids</taxon>
        <taxon>fabids</taxon>
        <taxon>Cucurbitales</taxon>
        <taxon>Cucurbitaceae</taxon>
        <taxon>Benincaseae</taxon>
        <taxon>Cucumis</taxon>
    </lineage>
</organism>
<comment type="function">
    <text evidence="1">Component of the cytochrome b6-f complex, which mediates electron transfer between photosystem II (PSII) and photosystem I (PSI), cyclic electron flow around PSI, and state transitions.</text>
</comment>
<comment type="cofactor">
    <cofactor evidence="1">
        <name>heme b</name>
        <dbReference type="ChEBI" id="CHEBI:60344"/>
    </cofactor>
    <text evidence="1">Binds 2 heme b groups non-covalently with two histidine residues as axial ligands.</text>
</comment>
<comment type="cofactor">
    <cofactor evidence="1">
        <name>heme c</name>
        <dbReference type="ChEBI" id="CHEBI:61717"/>
    </cofactor>
    <text evidence="1">Binds one heme group covalently by a single cysteine link with no axial amino acid ligand. This heme was named heme ci.</text>
</comment>
<comment type="subunit">
    <text evidence="1">The 4 large subunits of the cytochrome b6-f complex are cytochrome b6, subunit IV (17 kDa polypeptide, PetD), cytochrome f and the Rieske protein, while the 4 small subunits are PetG, PetL, PetM and PetN. The complex functions as a dimer.</text>
</comment>
<comment type="subcellular location">
    <subcellularLocation>
        <location evidence="1">Plastid</location>
        <location evidence="1">Chloroplast thylakoid membrane</location>
        <topology evidence="1">Multi-pass membrane protein</topology>
    </subcellularLocation>
</comment>
<comment type="miscellaneous">
    <text evidence="1">Heme 1 (or BH or b566) is high-potential and absorbs at about 566 nm, and heme 2 (or BL or b562) is low-potential and absorbs at about 562 nm.</text>
</comment>
<comment type="similarity">
    <text evidence="1">Belongs to the cytochrome b family. PetB subfamily.</text>
</comment>
<comment type="sequence caution" evidence="2">
    <conflict type="erroneous gene model prediction">
        <sequence resource="EMBL-CDS" id="ABI97446"/>
    </conflict>
    <text>The proposed translation is equivalent to the unspliced form that is know to occur in some monocots.</text>
</comment>
<proteinExistence type="inferred from homology"/>
<evidence type="ECO:0000255" key="1">
    <source>
        <dbReference type="HAMAP-Rule" id="MF_00633"/>
    </source>
</evidence>
<evidence type="ECO:0000305" key="2"/>
<sequence>MSKVYDWFEERLEIQAIADDITSKYVPPHVNIFYCLGGITLTCFLVQVATGFAMTFYYRPTVTEAFASVQYIMTEANFGWLIRSVHRWSASMMVLMMILHVFRVYLTGGFKKPRELTWVTGVVLAVLTASFGVTGYSLPRDQIGYWAVKIVTGVPEAIPVIGSPLVELLRGSASVGQSTLTRFYSLHTFVLPLLTAVFMLMHFPMIRKQGISGPL</sequence>
<feature type="chain" id="PRO_0000275312" description="Cytochrome b6">
    <location>
        <begin position="1"/>
        <end position="215"/>
    </location>
</feature>
<feature type="transmembrane region" description="Helical" evidence="1">
    <location>
        <begin position="32"/>
        <end position="52"/>
    </location>
</feature>
<feature type="transmembrane region" description="Helical" evidence="1">
    <location>
        <begin position="90"/>
        <end position="110"/>
    </location>
</feature>
<feature type="transmembrane region" description="Helical" evidence="1">
    <location>
        <begin position="116"/>
        <end position="136"/>
    </location>
</feature>
<feature type="transmembrane region" description="Helical" evidence="1">
    <location>
        <begin position="186"/>
        <end position="206"/>
    </location>
</feature>
<feature type="binding site" description="covalent" evidence="1">
    <location>
        <position position="35"/>
    </location>
    <ligand>
        <name>heme c</name>
        <dbReference type="ChEBI" id="CHEBI:61717"/>
    </ligand>
</feature>
<feature type="binding site" description="axial binding residue" evidence="1">
    <location>
        <position position="86"/>
    </location>
    <ligand>
        <name>heme b</name>
        <dbReference type="ChEBI" id="CHEBI:60344"/>
        <label>2</label>
    </ligand>
    <ligandPart>
        <name>Fe</name>
        <dbReference type="ChEBI" id="CHEBI:18248"/>
    </ligandPart>
</feature>
<feature type="binding site" description="axial binding residue" evidence="1">
    <location>
        <position position="100"/>
    </location>
    <ligand>
        <name>heme b</name>
        <dbReference type="ChEBI" id="CHEBI:60344"/>
        <label>1</label>
    </ligand>
    <ligandPart>
        <name>Fe</name>
        <dbReference type="ChEBI" id="CHEBI:18248"/>
    </ligandPart>
</feature>
<feature type="binding site" description="axial binding residue" evidence="1">
    <location>
        <position position="187"/>
    </location>
    <ligand>
        <name>heme b</name>
        <dbReference type="ChEBI" id="CHEBI:60344"/>
        <label>2</label>
    </ligand>
    <ligandPart>
        <name>Fe</name>
        <dbReference type="ChEBI" id="CHEBI:18248"/>
    </ligandPart>
</feature>
<feature type="binding site" description="axial binding residue" evidence="1">
    <location>
        <position position="202"/>
    </location>
    <ligand>
        <name>heme b</name>
        <dbReference type="ChEBI" id="CHEBI:60344"/>
        <label>1</label>
    </ligand>
    <ligandPart>
        <name>Fe</name>
        <dbReference type="ChEBI" id="CHEBI:18248"/>
    </ligandPart>
</feature>
<feature type="sequence conflict" description="In Ref. 3; ABI98775." evidence="2" ref="3">
    <original>MS</original>
    <variation>LN</variation>
    <location>
        <begin position="1"/>
        <end position="2"/>
    </location>
</feature>
<name>CYB6_CUCSA</name>
<geneLocation type="chloroplast"/>
<gene>
    <name evidence="1" type="primary">petB</name>
    <name type="ordered locus">CsCp072</name>
</gene>
<protein>
    <recommendedName>
        <fullName evidence="1">Cytochrome b6</fullName>
    </recommendedName>
</protein>
<dbReference type="EMBL" id="DQ119058">
    <property type="protein sequence ID" value="AAZ94680.1"/>
    <property type="molecule type" value="Genomic_DNA"/>
</dbReference>
<dbReference type="EMBL" id="AJ970307">
    <property type="protein sequence ID" value="CAJ00789.1"/>
    <property type="molecule type" value="Genomic_DNA"/>
</dbReference>
<dbReference type="EMBL" id="DQ865975">
    <property type="protein sequence ID" value="ABI97446.1"/>
    <property type="status" value="ALT_SEQ"/>
    <property type="molecule type" value="Genomic_DNA"/>
</dbReference>
<dbReference type="EMBL" id="DQ865976">
    <property type="protein sequence ID" value="ABI98775.1"/>
    <property type="molecule type" value="Genomic_DNA"/>
</dbReference>
<dbReference type="RefSeq" id="YP_247630.1">
    <property type="nucleotide sequence ID" value="NC_007144.1"/>
</dbReference>
<dbReference type="SMR" id="Q4VZI6"/>
<dbReference type="GeneID" id="3429266"/>
<dbReference type="KEGG" id="csv:3429266"/>
<dbReference type="OrthoDB" id="1663482at2759"/>
<dbReference type="GO" id="GO:0009535">
    <property type="term" value="C:chloroplast thylakoid membrane"/>
    <property type="evidence" value="ECO:0007669"/>
    <property type="project" value="UniProtKB-SubCell"/>
</dbReference>
<dbReference type="GO" id="GO:0045158">
    <property type="term" value="F:electron transporter, transferring electrons within cytochrome b6/f complex of photosystem II activity"/>
    <property type="evidence" value="ECO:0007669"/>
    <property type="project" value="UniProtKB-UniRule"/>
</dbReference>
<dbReference type="GO" id="GO:0046872">
    <property type="term" value="F:metal ion binding"/>
    <property type="evidence" value="ECO:0007669"/>
    <property type="project" value="UniProtKB-KW"/>
</dbReference>
<dbReference type="GO" id="GO:0016491">
    <property type="term" value="F:oxidoreductase activity"/>
    <property type="evidence" value="ECO:0007669"/>
    <property type="project" value="InterPro"/>
</dbReference>
<dbReference type="GO" id="GO:0015979">
    <property type="term" value="P:photosynthesis"/>
    <property type="evidence" value="ECO:0007669"/>
    <property type="project" value="UniProtKB-UniRule"/>
</dbReference>
<dbReference type="GO" id="GO:0022904">
    <property type="term" value="P:respiratory electron transport chain"/>
    <property type="evidence" value="ECO:0007669"/>
    <property type="project" value="InterPro"/>
</dbReference>
<dbReference type="CDD" id="cd00284">
    <property type="entry name" value="Cytochrome_b_N"/>
    <property type="match status" value="1"/>
</dbReference>
<dbReference type="FunFam" id="1.20.810.10:FF:000001">
    <property type="entry name" value="Cytochrome b6"/>
    <property type="match status" value="1"/>
</dbReference>
<dbReference type="Gene3D" id="1.20.810.10">
    <property type="entry name" value="Cytochrome Bc1 Complex, Chain C"/>
    <property type="match status" value="1"/>
</dbReference>
<dbReference type="HAMAP" id="MF_00633">
    <property type="entry name" value="Cytb6_f_cytb6"/>
    <property type="match status" value="1"/>
</dbReference>
<dbReference type="InterPro" id="IPR005797">
    <property type="entry name" value="Cyt_b/b6_N"/>
</dbReference>
<dbReference type="InterPro" id="IPR023530">
    <property type="entry name" value="Cyt_B6_PetB"/>
</dbReference>
<dbReference type="InterPro" id="IPR027387">
    <property type="entry name" value="Cytb/b6-like_sf"/>
</dbReference>
<dbReference type="InterPro" id="IPR048259">
    <property type="entry name" value="Cytochrome_b_N_euk/bac"/>
</dbReference>
<dbReference type="InterPro" id="IPR016174">
    <property type="entry name" value="Di-haem_cyt_TM"/>
</dbReference>
<dbReference type="NCBIfam" id="NF002990">
    <property type="entry name" value="PRK03735.1"/>
    <property type="match status" value="1"/>
</dbReference>
<dbReference type="PANTHER" id="PTHR19271">
    <property type="entry name" value="CYTOCHROME B"/>
    <property type="match status" value="1"/>
</dbReference>
<dbReference type="PANTHER" id="PTHR19271:SF16">
    <property type="entry name" value="CYTOCHROME B"/>
    <property type="match status" value="1"/>
</dbReference>
<dbReference type="Pfam" id="PF00033">
    <property type="entry name" value="Cytochrome_B"/>
    <property type="match status" value="1"/>
</dbReference>
<dbReference type="PIRSF" id="PIRSF000032">
    <property type="entry name" value="Cytochrome_b6"/>
    <property type="match status" value="1"/>
</dbReference>
<dbReference type="SUPFAM" id="SSF81342">
    <property type="entry name" value="Transmembrane di-heme cytochromes"/>
    <property type="match status" value="1"/>
</dbReference>
<dbReference type="PROSITE" id="PS51002">
    <property type="entry name" value="CYTB_NTER"/>
    <property type="match status" value="1"/>
</dbReference>
<reference key="1">
    <citation type="journal article" date="2006" name="Plant Cell Rep.">
        <title>Complete sequence and organization of the cucumber (Cucumis sativus L. cv. Baekmibaekdadagi) chloroplast genome.</title>
        <authorList>
            <person name="Kim J.-S."/>
            <person name="Jung J.D."/>
            <person name="Lee J.-A."/>
            <person name="Park H.-W."/>
            <person name="Oh K.-H."/>
            <person name="Jeong W.J."/>
            <person name="Choi D.-W."/>
            <person name="Liu J.R."/>
            <person name="Cho K.Y."/>
        </authorList>
    </citation>
    <scope>NUCLEOTIDE SEQUENCE [LARGE SCALE GENOMIC DNA]</scope>
    <source>
        <strain>cv. Baekmibaekdadagi</strain>
    </source>
</reference>
<reference key="2">
    <citation type="journal article" date="2007" name="Cell. Mol. Biol. Lett.">
        <title>The complete structure of the cucumber (Cucumis sativus L.) chloroplast genome: its composition and comparative analysis.</title>
        <authorList>
            <person name="Plader W.W."/>
            <person name="Yukawa Y."/>
            <person name="Sugiura M."/>
            <person name="Malepszy S."/>
        </authorList>
    </citation>
    <scope>NUCLEOTIDE SEQUENCE [LARGE SCALE GENOMIC DNA]</scope>
    <source>
        <strain>cv. Borszczagowski</strain>
    </source>
</reference>
<reference key="3">
    <citation type="journal article" date="2007" name="Genome">
        <title>Sequencing cucumber (Cucumis sativus L.) chloroplast genomes identifies differences between chilling-tolerant and -susceptible cucumber lines.</title>
        <authorList>
            <person name="Chung S.-M."/>
            <person name="Gordon V.S."/>
            <person name="Staub J.E."/>
        </authorList>
    </citation>
    <scope>NUCLEOTIDE SEQUENCE [LARGE SCALE GENOMIC DNA]</scope>
    <source>
        <strain>cv. Chipper</strain>
        <strain>cv. Gy14</strain>
    </source>
</reference>
<accession>Q4VZI6</accession>
<accession>A5J1W4</accession>
<accession>A5J247</accession>
<keyword id="KW-0150">Chloroplast</keyword>
<keyword id="KW-0249">Electron transport</keyword>
<keyword id="KW-0349">Heme</keyword>
<keyword id="KW-0408">Iron</keyword>
<keyword id="KW-0472">Membrane</keyword>
<keyword id="KW-0479">Metal-binding</keyword>
<keyword id="KW-0602">Photosynthesis</keyword>
<keyword id="KW-0934">Plastid</keyword>
<keyword id="KW-0793">Thylakoid</keyword>
<keyword id="KW-0812">Transmembrane</keyword>
<keyword id="KW-1133">Transmembrane helix</keyword>
<keyword id="KW-0813">Transport</keyword>